<sequence>MLSSTTLLAILSALALTSVQAAPADKNSLDYLANKAGKRYLGTAVQSPQLVPGSQYVQILESQFDAITPENEMKWEVVEPTEGNFDFTGTDKIVAEAKKTGSLLRGHNICWDSQLRYAHEVAPKMKLCINDYNIETVNAKSQAMAKVAAGLLAKGAPLHCIGMFKNAKRRSSGLLIRTASSGLESHFIGGSTPKDIPAAMNLFSDQGLEVPMTELDVRIPVNGNDMPANATVAKEQVDDYYTSVSACLGNDLCPGVSIWQFADPTSWIPGVFKGKLIAVSCTFSGCLLQYCVGYGAALLYDAQYQPKSTYYVVQQALKDGKNSGSKFHGIKL</sequence>
<accession>P07529</accession>
<organism>
    <name type="scientific">Naganishia albida</name>
    <name type="common">Cryptococcus albidus</name>
    <dbReference type="NCBI Taxonomy" id="100951"/>
    <lineage>
        <taxon>Eukaryota</taxon>
        <taxon>Fungi</taxon>
        <taxon>Dikarya</taxon>
        <taxon>Basidiomycota</taxon>
        <taxon>Agaricomycotina</taxon>
        <taxon>Tremellomycetes</taxon>
        <taxon>Filobasidiales</taxon>
        <taxon>Filobasidiaceae</taxon>
        <taxon>Naganishia</taxon>
    </lineage>
</organism>
<evidence type="ECO:0000250" key="1"/>
<evidence type="ECO:0000255" key="2">
    <source>
        <dbReference type="PROSITE-ProRule" id="PRU01096"/>
    </source>
</evidence>
<evidence type="ECO:0000255" key="3">
    <source>
        <dbReference type="PROSITE-ProRule" id="PRU10061"/>
    </source>
</evidence>
<evidence type="ECO:0000269" key="4">
    <source ref="2"/>
</evidence>
<evidence type="ECO:0000305" key="5"/>
<feature type="signal peptide" evidence="4">
    <location>
        <begin position="1"/>
        <end position="21"/>
    </location>
</feature>
<feature type="chain" id="PRO_0000007971" description="Endo-1,4-beta-xylanase">
    <location>
        <begin position="22"/>
        <end position="332"/>
    </location>
</feature>
<feature type="domain" description="GH10" evidence="2">
    <location>
        <begin position="26"/>
        <end position="316"/>
    </location>
</feature>
<feature type="active site" description="Proton donor" evidence="1">
    <location>
        <position position="120"/>
    </location>
</feature>
<feature type="active site" description="Nucleophile" evidence="3">
    <location>
        <position position="214"/>
    </location>
</feature>
<feature type="disulfide bond" evidence="1">
    <location>
        <begin position="128"/>
        <end position="160"/>
    </location>
</feature>
<feature type="disulfide bond" evidence="1">
    <location>
        <begin position="247"/>
        <end position="253"/>
    </location>
</feature>
<feature type="sequence conflict" description="In Ref. 2; AA sequence." evidence="5" ref="2">
    <original>TGT</original>
    <variation>AGL</variation>
    <location>
        <begin position="88"/>
        <end position="90"/>
    </location>
</feature>
<reference key="1">
    <citation type="journal article" date="1988" name="Nucleic Acids Res.">
        <title>Complete nucleotide sequence of the xylanase gene from the yeast Cryptococcus albidus.</title>
        <authorList>
            <person name="Boucher F."/>
            <person name="Morosoli R."/>
            <person name="Durand S."/>
        </authorList>
    </citation>
    <scope>NUCLEOTIDE SEQUENCE [GENOMIC DNA]</scope>
    <source>
        <strain>CCY 17-4-4</strain>
    </source>
</reference>
<reference key="2">
    <citation type="journal article" date="1986" name="Biochim. Biophys. Acta">
        <title>Isolation and partial primary sequence of a xylanase from the yeast Cryptococcus albidus.</title>
        <authorList>
            <person name="Morosoli R."/>
            <person name="Roy C."/>
            <person name="Yaguchi M."/>
        </authorList>
    </citation>
    <scope>PROTEIN SEQUENCE OF 22-93</scope>
</reference>
<proteinExistence type="evidence at protein level"/>
<dbReference type="EC" id="3.2.1.8"/>
<dbReference type="EMBL" id="X12596">
    <property type="protein sequence ID" value="CAA31109.1"/>
    <property type="molecule type" value="Genomic_DNA"/>
</dbReference>
<dbReference type="PIR" id="JS0734">
    <property type="entry name" value="JS0734"/>
</dbReference>
<dbReference type="SMR" id="P07529"/>
<dbReference type="CAZy" id="GH10">
    <property type="family name" value="Glycoside Hydrolase Family 10"/>
</dbReference>
<dbReference type="GO" id="GO:0005576">
    <property type="term" value="C:extracellular region"/>
    <property type="evidence" value="ECO:0007669"/>
    <property type="project" value="UniProtKB-SubCell"/>
</dbReference>
<dbReference type="GO" id="GO:0031176">
    <property type="term" value="F:endo-1,4-beta-xylanase activity"/>
    <property type="evidence" value="ECO:0007669"/>
    <property type="project" value="UniProtKB-EC"/>
</dbReference>
<dbReference type="GO" id="GO:0045493">
    <property type="term" value="P:xylan catabolic process"/>
    <property type="evidence" value="ECO:0007669"/>
    <property type="project" value="UniProtKB-KW"/>
</dbReference>
<dbReference type="Gene3D" id="3.20.20.80">
    <property type="entry name" value="Glycosidases"/>
    <property type="match status" value="2"/>
</dbReference>
<dbReference type="InterPro" id="IPR044846">
    <property type="entry name" value="GH10"/>
</dbReference>
<dbReference type="InterPro" id="IPR031158">
    <property type="entry name" value="GH10_AS"/>
</dbReference>
<dbReference type="InterPro" id="IPR001000">
    <property type="entry name" value="GH10_dom"/>
</dbReference>
<dbReference type="InterPro" id="IPR017853">
    <property type="entry name" value="Glycoside_hydrolase_SF"/>
</dbReference>
<dbReference type="PANTHER" id="PTHR31490:SF88">
    <property type="entry name" value="BETA-XYLANASE"/>
    <property type="match status" value="1"/>
</dbReference>
<dbReference type="PANTHER" id="PTHR31490">
    <property type="entry name" value="GLYCOSYL HYDROLASE"/>
    <property type="match status" value="1"/>
</dbReference>
<dbReference type="Pfam" id="PF00331">
    <property type="entry name" value="Glyco_hydro_10"/>
    <property type="match status" value="2"/>
</dbReference>
<dbReference type="SMART" id="SM00633">
    <property type="entry name" value="Glyco_10"/>
    <property type="match status" value="1"/>
</dbReference>
<dbReference type="SUPFAM" id="SSF51445">
    <property type="entry name" value="(Trans)glycosidases"/>
    <property type="match status" value="1"/>
</dbReference>
<dbReference type="PROSITE" id="PS00591">
    <property type="entry name" value="GH10_1"/>
    <property type="match status" value="1"/>
</dbReference>
<dbReference type="PROSITE" id="PS51760">
    <property type="entry name" value="GH10_2"/>
    <property type="match status" value="1"/>
</dbReference>
<protein>
    <recommendedName>
        <fullName>Endo-1,4-beta-xylanase</fullName>
        <shortName>Xylanase</shortName>
        <ecNumber>3.2.1.8</ecNumber>
    </recommendedName>
    <alternativeName>
        <fullName>1,4-beta-D-xylan xylanohydrolase</fullName>
    </alternativeName>
</protein>
<comment type="function">
    <text>Requires at least three xylose residues for catalytic activity. Does not have activity against xylobiose.</text>
</comment>
<comment type="catalytic activity">
    <reaction>
        <text>Endohydrolysis of (1-&gt;4)-beta-D-xylosidic linkages in xylans.</text>
        <dbReference type="EC" id="3.2.1.8"/>
    </reaction>
</comment>
<comment type="subcellular location">
    <subcellularLocation>
        <location>Secreted</location>
    </subcellularLocation>
</comment>
<comment type="similarity">
    <text evidence="5">Belongs to the glycosyl hydrolase 10 (cellulase F) family.</text>
</comment>
<name>XYNA_NAGAL</name>
<keyword id="KW-0119">Carbohydrate metabolism</keyword>
<keyword id="KW-0903">Direct protein sequencing</keyword>
<keyword id="KW-1015">Disulfide bond</keyword>
<keyword id="KW-0326">Glycosidase</keyword>
<keyword id="KW-0378">Hydrolase</keyword>
<keyword id="KW-0624">Polysaccharide degradation</keyword>
<keyword id="KW-0964">Secreted</keyword>
<keyword id="KW-0732">Signal</keyword>
<keyword id="KW-0858">Xylan degradation</keyword>